<protein>
    <recommendedName>
        <fullName evidence="1">Guanylate kinase</fullName>
        <ecNumber evidence="1">2.7.4.8</ecNumber>
    </recommendedName>
    <alternativeName>
        <fullName evidence="1">GMP kinase</fullName>
    </alternativeName>
</protein>
<gene>
    <name evidence="1" type="primary">gmk</name>
    <name type="ordered locus">RPD_2974</name>
</gene>
<dbReference type="EC" id="2.7.4.8" evidence="1"/>
<dbReference type="EMBL" id="CP000283">
    <property type="protein sequence ID" value="ABE40200.1"/>
    <property type="molecule type" value="Genomic_DNA"/>
</dbReference>
<dbReference type="SMR" id="Q135N9"/>
<dbReference type="STRING" id="316057.RPD_2974"/>
<dbReference type="KEGG" id="rpd:RPD_2974"/>
<dbReference type="eggNOG" id="COG0194">
    <property type="taxonomic scope" value="Bacteria"/>
</dbReference>
<dbReference type="HOGENOM" id="CLU_001715_1_0_5"/>
<dbReference type="BioCyc" id="RPAL316057:RPD_RS14940-MONOMER"/>
<dbReference type="Proteomes" id="UP000001818">
    <property type="component" value="Chromosome"/>
</dbReference>
<dbReference type="GO" id="GO:0005829">
    <property type="term" value="C:cytosol"/>
    <property type="evidence" value="ECO:0007669"/>
    <property type="project" value="TreeGrafter"/>
</dbReference>
<dbReference type="GO" id="GO:0005524">
    <property type="term" value="F:ATP binding"/>
    <property type="evidence" value="ECO:0007669"/>
    <property type="project" value="UniProtKB-UniRule"/>
</dbReference>
<dbReference type="GO" id="GO:0004385">
    <property type="term" value="F:guanylate kinase activity"/>
    <property type="evidence" value="ECO:0007669"/>
    <property type="project" value="UniProtKB-UniRule"/>
</dbReference>
<dbReference type="CDD" id="cd00071">
    <property type="entry name" value="GMPK"/>
    <property type="match status" value="1"/>
</dbReference>
<dbReference type="FunFam" id="3.30.63.10:FF:000002">
    <property type="entry name" value="Guanylate kinase 1"/>
    <property type="match status" value="1"/>
</dbReference>
<dbReference type="Gene3D" id="3.30.63.10">
    <property type="entry name" value="Guanylate Kinase phosphate binding domain"/>
    <property type="match status" value="1"/>
</dbReference>
<dbReference type="Gene3D" id="3.40.50.300">
    <property type="entry name" value="P-loop containing nucleotide triphosphate hydrolases"/>
    <property type="match status" value="1"/>
</dbReference>
<dbReference type="HAMAP" id="MF_00328">
    <property type="entry name" value="Guanylate_kinase"/>
    <property type="match status" value="1"/>
</dbReference>
<dbReference type="InterPro" id="IPR008145">
    <property type="entry name" value="GK/Ca_channel_bsu"/>
</dbReference>
<dbReference type="InterPro" id="IPR008144">
    <property type="entry name" value="Guanylate_kin-like_dom"/>
</dbReference>
<dbReference type="InterPro" id="IPR017665">
    <property type="entry name" value="Guanylate_kinase"/>
</dbReference>
<dbReference type="InterPro" id="IPR020590">
    <property type="entry name" value="Guanylate_kinase_CS"/>
</dbReference>
<dbReference type="InterPro" id="IPR027417">
    <property type="entry name" value="P-loop_NTPase"/>
</dbReference>
<dbReference type="NCBIfam" id="TIGR03263">
    <property type="entry name" value="guanyl_kin"/>
    <property type="match status" value="1"/>
</dbReference>
<dbReference type="PANTHER" id="PTHR23117:SF13">
    <property type="entry name" value="GUANYLATE KINASE"/>
    <property type="match status" value="1"/>
</dbReference>
<dbReference type="PANTHER" id="PTHR23117">
    <property type="entry name" value="GUANYLATE KINASE-RELATED"/>
    <property type="match status" value="1"/>
</dbReference>
<dbReference type="Pfam" id="PF00625">
    <property type="entry name" value="Guanylate_kin"/>
    <property type="match status" value="1"/>
</dbReference>
<dbReference type="SMART" id="SM00072">
    <property type="entry name" value="GuKc"/>
    <property type="match status" value="1"/>
</dbReference>
<dbReference type="SUPFAM" id="SSF52540">
    <property type="entry name" value="P-loop containing nucleoside triphosphate hydrolases"/>
    <property type="match status" value="1"/>
</dbReference>
<dbReference type="PROSITE" id="PS00856">
    <property type="entry name" value="GUANYLATE_KINASE_1"/>
    <property type="match status" value="1"/>
</dbReference>
<dbReference type="PROSITE" id="PS50052">
    <property type="entry name" value="GUANYLATE_KINASE_2"/>
    <property type="match status" value="1"/>
</dbReference>
<sequence>MKDGSGGFNGVERRGLMFVLSSPSGAGKTTLSRMLVDEAPGLTMSVSATTRPRRPGEVDGRDYYFVDRPKFDAMVEADEFLEWAHVFDNCYGTPRAPVEAALAAGRDVLFDIDWQGTQQLRSRASNDVVSVFILPPSVQDLEHRLHTRAQDSDEVIRGRMKKAGDEMSHFDAYDYIVVNDNIGVAFESVKAILRAEQLKRERQIGIEAFVRDMRRQLEK</sequence>
<accession>Q135N9</accession>
<evidence type="ECO:0000255" key="1">
    <source>
        <dbReference type="HAMAP-Rule" id="MF_00328"/>
    </source>
</evidence>
<feature type="chain" id="PRO_0000266385" description="Guanylate kinase">
    <location>
        <begin position="1"/>
        <end position="219"/>
    </location>
</feature>
<feature type="domain" description="Guanylate kinase-like" evidence="1">
    <location>
        <begin position="15"/>
        <end position="194"/>
    </location>
</feature>
<feature type="binding site" evidence="1">
    <location>
        <begin position="22"/>
        <end position="29"/>
    </location>
    <ligand>
        <name>ATP</name>
        <dbReference type="ChEBI" id="CHEBI:30616"/>
    </ligand>
</feature>
<organism>
    <name type="scientific">Rhodopseudomonas palustris (strain BisB5)</name>
    <dbReference type="NCBI Taxonomy" id="316057"/>
    <lineage>
        <taxon>Bacteria</taxon>
        <taxon>Pseudomonadati</taxon>
        <taxon>Pseudomonadota</taxon>
        <taxon>Alphaproteobacteria</taxon>
        <taxon>Hyphomicrobiales</taxon>
        <taxon>Nitrobacteraceae</taxon>
        <taxon>Rhodopseudomonas</taxon>
    </lineage>
</organism>
<proteinExistence type="inferred from homology"/>
<name>KGUA_RHOPS</name>
<comment type="function">
    <text evidence="1">Essential for recycling GMP and indirectly, cGMP.</text>
</comment>
<comment type="catalytic activity">
    <reaction evidence="1">
        <text>GMP + ATP = GDP + ADP</text>
        <dbReference type="Rhea" id="RHEA:20780"/>
        <dbReference type="ChEBI" id="CHEBI:30616"/>
        <dbReference type="ChEBI" id="CHEBI:58115"/>
        <dbReference type="ChEBI" id="CHEBI:58189"/>
        <dbReference type="ChEBI" id="CHEBI:456216"/>
        <dbReference type="EC" id="2.7.4.8"/>
    </reaction>
</comment>
<comment type="subcellular location">
    <subcellularLocation>
        <location evidence="1">Cytoplasm</location>
    </subcellularLocation>
</comment>
<comment type="similarity">
    <text evidence="1">Belongs to the guanylate kinase family.</text>
</comment>
<keyword id="KW-0067">ATP-binding</keyword>
<keyword id="KW-0963">Cytoplasm</keyword>
<keyword id="KW-0418">Kinase</keyword>
<keyword id="KW-0547">Nucleotide-binding</keyword>
<keyword id="KW-0808">Transferase</keyword>
<reference key="1">
    <citation type="submission" date="2006-03" db="EMBL/GenBank/DDBJ databases">
        <title>Complete sequence of Rhodopseudomonas palustris BisB5.</title>
        <authorList>
            <consortium name="US DOE Joint Genome Institute"/>
            <person name="Copeland A."/>
            <person name="Lucas S."/>
            <person name="Lapidus A."/>
            <person name="Barry K."/>
            <person name="Detter J.C."/>
            <person name="Glavina del Rio T."/>
            <person name="Hammon N."/>
            <person name="Israni S."/>
            <person name="Dalin E."/>
            <person name="Tice H."/>
            <person name="Pitluck S."/>
            <person name="Chain P."/>
            <person name="Malfatti S."/>
            <person name="Shin M."/>
            <person name="Vergez L."/>
            <person name="Schmutz J."/>
            <person name="Larimer F."/>
            <person name="Land M."/>
            <person name="Hauser L."/>
            <person name="Pelletier D.A."/>
            <person name="Kyrpides N."/>
            <person name="Lykidis A."/>
            <person name="Oda Y."/>
            <person name="Harwood C.S."/>
            <person name="Richardson P."/>
        </authorList>
    </citation>
    <scope>NUCLEOTIDE SEQUENCE [LARGE SCALE GENOMIC DNA]</scope>
    <source>
        <strain>BisB5</strain>
    </source>
</reference>